<name>HYAL4_MOUSE</name>
<accession>Q05A56</accession>
<accession>Q9D660</accession>
<organism>
    <name type="scientific">Mus musculus</name>
    <name type="common">Mouse</name>
    <dbReference type="NCBI Taxonomy" id="10090"/>
    <lineage>
        <taxon>Eukaryota</taxon>
        <taxon>Metazoa</taxon>
        <taxon>Chordata</taxon>
        <taxon>Craniata</taxon>
        <taxon>Vertebrata</taxon>
        <taxon>Euteleostomi</taxon>
        <taxon>Mammalia</taxon>
        <taxon>Eutheria</taxon>
        <taxon>Euarchontoglires</taxon>
        <taxon>Glires</taxon>
        <taxon>Rodentia</taxon>
        <taxon>Myomorpha</taxon>
        <taxon>Muroidea</taxon>
        <taxon>Muridae</taxon>
        <taxon>Murinae</taxon>
        <taxon>Mus</taxon>
        <taxon>Mus</taxon>
    </lineage>
</organism>
<dbReference type="EC" id="3.2.1.35"/>
<dbReference type="EMBL" id="AK014599">
    <property type="protein sequence ID" value="BAB29454.1"/>
    <property type="molecule type" value="mRNA"/>
</dbReference>
<dbReference type="EMBL" id="BC125402">
    <property type="protein sequence ID" value="AAI25403.1"/>
    <property type="molecule type" value="mRNA"/>
</dbReference>
<dbReference type="EMBL" id="BC132096">
    <property type="protein sequence ID" value="AAI32097.1"/>
    <property type="molecule type" value="mRNA"/>
</dbReference>
<dbReference type="CCDS" id="CCDS39441.1"/>
<dbReference type="RefSeq" id="NP_084124.1">
    <property type="nucleotide sequence ID" value="NM_029848.1"/>
</dbReference>
<dbReference type="SMR" id="Q05A56"/>
<dbReference type="FunCoup" id="Q05A56">
    <property type="interactions" value="151"/>
</dbReference>
<dbReference type="STRING" id="10090.ENSMUSP00000031691"/>
<dbReference type="CAZy" id="GH56">
    <property type="family name" value="Glycoside Hydrolase Family 56"/>
</dbReference>
<dbReference type="GlyCosmos" id="Q05A56">
    <property type="glycosylation" value="4 sites, No reported glycans"/>
</dbReference>
<dbReference type="GlyGen" id="Q05A56">
    <property type="glycosylation" value="4 sites"/>
</dbReference>
<dbReference type="iPTMnet" id="Q05A56"/>
<dbReference type="PhosphoSitePlus" id="Q05A56"/>
<dbReference type="PaxDb" id="10090-ENSMUSP00000031691"/>
<dbReference type="ProteomicsDB" id="273290"/>
<dbReference type="Antibodypedia" id="31779">
    <property type="antibodies" value="81 antibodies from 17 providers"/>
</dbReference>
<dbReference type="Ensembl" id="ENSMUST00000031691.3">
    <property type="protein sequence ID" value="ENSMUSP00000031691.3"/>
    <property type="gene ID" value="ENSMUSG00000029680.3"/>
</dbReference>
<dbReference type="GeneID" id="77042"/>
<dbReference type="KEGG" id="mmu:77042"/>
<dbReference type="UCSC" id="uc009bbx.1">
    <property type="organism name" value="mouse"/>
</dbReference>
<dbReference type="AGR" id="MGI:1924292"/>
<dbReference type="CTD" id="23553"/>
<dbReference type="MGI" id="MGI:1924292">
    <property type="gene designation" value="Hyal4"/>
</dbReference>
<dbReference type="VEuPathDB" id="HostDB:ENSMUSG00000029680"/>
<dbReference type="eggNOG" id="ENOG502QPZH">
    <property type="taxonomic scope" value="Eukaryota"/>
</dbReference>
<dbReference type="GeneTree" id="ENSGT01020000230364"/>
<dbReference type="HOGENOM" id="CLU_036366_0_0_1"/>
<dbReference type="InParanoid" id="Q05A56"/>
<dbReference type="OMA" id="CAKAFMK"/>
<dbReference type="OrthoDB" id="5796153at2759"/>
<dbReference type="PhylomeDB" id="Q05A56"/>
<dbReference type="TreeFam" id="TF321598"/>
<dbReference type="BioGRID-ORCS" id="77042">
    <property type="hits" value="1 hit in 78 CRISPR screens"/>
</dbReference>
<dbReference type="PRO" id="PR:Q05A56"/>
<dbReference type="Proteomes" id="UP000000589">
    <property type="component" value="Chromosome 6"/>
</dbReference>
<dbReference type="RNAct" id="Q05A56">
    <property type="molecule type" value="protein"/>
</dbReference>
<dbReference type="Bgee" id="ENSMUSG00000029680">
    <property type="expression patterns" value="Expressed in interventricular septum and 24 other cell types or tissues"/>
</dbReference>
<dbReference type="ExpressionAtlas" id="Q05A56">
    <property type="expression patterns" value="baseline and differential"/>
</dbReference>
<dbReference type="GO" id="GO:0009986">
    <property type="term" value="C:cell surface"/>
    <property type="evidence" value="ECO:0000314"/>
    <property type="project" value="MGI"/>
</dbReference>
<dbReference type="GO" id="GO:0005764">
    <property type="term" value="C:lysosome"/>
    <property type="evidence" value="ECO:0000266"/>
    <property type="project" value="MGI"/>
</dbReference>
<dbReference type="GO" id="GO:0016020">
    <property type="term" value="C:membrane"/>
    <property type="evidence" value="ECO:0007669"/>
    <property type="project" value="UniProtKB-SubCell"/>
</dbReference>
<dbReference type="GO" id="GO:0052757">
    <property type="term" value="F:chondroitin hydrolase activity"/>
    <property type="evidence" value="ECO:0000266"/>
    <property type="project" value="MGI"/>
</dbReference>
<dbReference type="GO" id="GO:0004415">
    <property type="term" value="F:hyalurononglucosaminidase activity"/>
    <property type="evidence" value="ECO:0000314"/>
    <property type="project" value="MGI"/>
</dbReference>
<dbReference type="GO" id="GO:0005975">
    <property type="term" value="P:carbohydrate metabolic process"/>
    <property type="evidence" value="ECO:0007669"/>
    <property type="project" value="InterPro"/>
</dbReference>
<dbReference type="GO" id="GO:0030207">
    <property type="term" value="P:chondroitin sulfate proteoglycan catabolic process"/>
    <property type="evidence" value="ECO:0000314"/>
    <property type="project" value="MGI"/>
</dbReference>
<dbReference type="FunFam" id="3.20.20.70:FF:000065">
    <property type="entry name" value="Hyaluronidase"/>
    <property type="match status" value="1"/>
</dbReference>
<dbReference type="Gene3D" id="3.20.20.70">
    <property type="entry name" value="Aldolase class I"/>
    <property type="match status" value="1"/>
</dbReference>
<dbReference type="InterPro" id="IPR013785">
    <property type="entry name" value="Aldolase_TIM"/>
</dbReference>
<dbReference type="InterPro" id="IPR017853">
    <property type="entry name" value="Glycoside_hydrolase_SF"/>
</dbReference>
<dbReference type="InterPro" id="IPR018155">
    <property type="entry name" value="Hyaluronidase"/>
</dbReference>
<dbReference type="PANTHER" id="PTHR11769">
    <property type="entry name" value="HYALURONIDASE"/>
    <property type="match status" value="1"/>
</dbReference>
<dbReference type="PANTHER" id="PTHR11769:SF7">
    <property type="entry name" value="HYALURONIDASE-4"/>
    <property type="match status" value="1"/>
</dbReference>
<dbReference type="Pfam" id="PF01630">
    <property type="entry name" value="Glyco_hydro_56"/>
    <property type="match status" value="1"/>
</dbReference>
<dbReference type="PIRSF" id="PIRSF038193">
    <property type="entry name" value="Hyaluronidase"/>
    <property type="match status" value="1"/>
</dbReference>
<dbReference type="PRINTS" id="PR00846">
    <property type="entry name" value="GLHYDRLASE56"/>
</dbReference>
<dbReference type="PRINTS" id="PR00848">
    <property type="entry name" value="SPERMPH20"/>
</dbReference>
<dbReference type="SUPFAM" id="SSF51445">
    <property type="entry name" value="(Trans)glycosidases"/>
    <property type="match status" value="1"/>
</dbReference>
<dbReference type="PROSITE" id="PS00022">
    <property type="entry name" value="EGF_1"/>
    <property type="match status" value="1"/>
</dbReference>
<dbReference type="PROSITE" id="PS01186">
    <property type="entry name" value="EGF_2"/>
    <property type="match status" value="1"/>
</dbReference>
<proteinExistence type="evidence at transcript level"/>
<gene>
    <name type="primary">Hyal4</name>
</gene>
<evidence type="ECO:0000250" key="1"/>
<evidence type="ECO:0000255" key="2"/>
<evidence type="ECO:0000305" key="3"/>
<comment type="function">
    <text evidence="1">Endo-hyaluronidase that degrades hyaluronan to smaller oligosaccharide fragments. Also has chondroitin sulfate hydrolase activity, The best substrate being the galactosaminidic linkage in the sequence of a trisulfated tetrasaccharide (By similarity).</text>
</comment>
<comment type="catalytic activity">
    <reaction>
        <text>Random hydrolysis of (1-&gt;4)-linkages between N-acetyl-beta-D-glucosamine and D-glucuronate residues in hyaluronate.</text>
        <dbReference type="EC" id="3.2.1.35"/>
    </reaction>
</comment>
<comment type="subcellular location">
    <subcellularLocation>
        <location evidence="3">Membrane</location>
        <topology evidence="3">Multi-pass membrane protein</topology>
    </subcellularLocation>
</comment>
<comment type="similarity">
    <text evidence="3">Belongs to the glycosyl hydrolase 56 family.</text>
</comment>
<feature type="chain" id="PRO_0000302000" description="Hyaluronidase-4">
    <location>
        <begin position="1"/>
        <end position="481"/>
    </location>
</feature>
<feature type="topological domain" description="Cytoplasmic" evidence="2">
    <location>
        <begin position="1"/>
        <end position="11"/>
    </location>
</feature>
<feature type="transmembrane region" description="Helical" evidence="2">
    <location>
        <begin position="12"/>
        <end position="32"/>
    </location>
</feature>
<feature type="topological domain" description="Extracellular" evidence="2">
    <location>
        <begin position="33"/>
        <end position="455"/>
    </location>
</feature>
<feature type="transmembrane region" description="Helical" evidence="2">
    <location>
        <begin position="456"/>
        <end position="476"/>
    </location>
</feature>
<feature type="topological domain" description="Cytoplasmic" evidence="2">
    <location>
        <begin position="477"/>
        <end position="481"/>
    </location>
</feature>
<feature type="active site" description="Proton donor" evidence="1">
    <location>
        <position position="147"/>
    </location>
</feature>
<feature type="glycosylation site" description="N-linked (GlcNAc...) asparagine" evidence="2">
    <location>
        <position position="64"/>
    </location>
</feature>
<feature type="glycosylation site" description="N-linked (GlcNAc...) asparagine" evidence="2">
    <location>
        <position position="115"/>
    </location>
</feature>
<feature type="glycosylation site" description="N-linked (GlcNAc...) asparagine" evidence="2">
    <location>
        <position position="232"/>
    </location>
</feature>
<feature type="glycosylation site" description="N-linked (GlcNAc...) asparagine" evidence="2">
    <location>
        <position position="343"/>
    </location>
</feature>
<feature type="disulfide bond" evidence="1">
    <location>
        <begin position="59"/>
        <end position="351"/>
    </location>
</feature>
<feature type="disulfide bond" evidence="1">
    <location>
        <begin position="223"/>
        <end position="237"/>
    </location>
</feature>
<feature type="disulfide bond" evidence="1">
    <location>
        <begin position="376"/>
        <end position="387"/>
    </location>
</feature>
<feature type="disulfide bond" evidence="1">
    <location>
        <begin position="381"/>
        <end position="435"/>
    </location>
</feature>
<feature type="disulfide bond" evidence="1">
    <location>
        <begin position="437"/>
        <end position="446"/>
    </location>
</feature>
<feature type="sequence conflict" description="In Ref. 1; BAB29454." evidence="3" ref="1">
    <original>KAA</original>
    <variation>GAG</variation>
    <location>
        <begin position="124"/>
        <end position="126"/>
    </location>
</feature>
<feature type="sequence conflict" description="In Ref. 1; BAB29454." evidence="3" ref="1">
    <original>LS</original>
    <variation>PF</variation>
    <location>
        <begin position="316"/>
        <end position="317"/>
    </location>
</feature>
<feature type="sequence conflict" description="In Ref. 1; BAB29454." evidence="3" ref="1">
    <original>C</original>
    <variation>S</variation>
    <location>
        <position position="376"/>
    </location>
</feature>
<reference key="1">
    <citation type="journal article" date="2005" name="Science">
        <title>The transcriptional landscape of the mammalian genome.</title>
        <authorList>
            <person name="Carninci P."/>
            <person name="Kasukawa T."/>
            <person name="Katayama S."/>
            <person name="Gough J."/>
            <person name="Frith M.C."/>
            <person name="Maeda N."/>
            <person name="Oyama R."/>
            <person name="Ravasi T."/>
            <person name="Lenhard B."/>
            <person name="Wells C."/>
            <person name="Kodzius R."/>
            <person name="Shimokawa K."/>
            <person name="Bajic V.B."/>
            <person name="Brenner S.E."/>
            <person name="Batalov S."/>
            <person name="Forrest A.R."/>
            <person name="Zavolan M."/>
            <person name="Davis M.J."/>
            <person name="Wilming L.G."/>
            <person name="Aidinis V."/>
            <person name="Allen J.E."/>
            <person name="Ambesi-Impiombato A."/>
            <person name="Apweiler R."/>
            <person name="Aturaliya R.N."/>
            <person name="Bailey T.L."/>
            <person name="Bansal M."/>
            <person name="Baxter L."/>
            <person name="Beisel K.W."/>
            <person name="Bersano T."/>
            <person name="Bono H."/>
            <person name="Chalk A.M."/>
            <person name="Chiu K.P."/>
            <person name="Choudhary V."/>
            <person name="Christoffels A."/>
            <person name="Clutterbuck D.R."/>
            <person name="Crowe M.L."/>
            <person name="Dalla E."/>
            <person name="Dalrymple B.P."/>
            <person name="de Bono B."/>
            <person name="Della Gatta G."/>
            <person name="di Bernardo D."/>
            <person name="Down T."/>
            <person name="Engstrom P."/>
            <person name="Fagiolini M."/>
            <person name="Faulkner G."/>
            <person name="Fletcher C.F."/>
            <person name="Fukushima T."/>
            <person name="Furuno M."/>
            <person name="Futaki S."/>
            <person name="Gariboldi M."/>
            <person name="Georgii-Hemming P."/>
            <person name="Gingeras T.R."/>
            <person name="Gojobori T."/>
            <person name="Green R.E."/>
            <person name="Gustincich S."/>
            <person name="Harbers M."/>
            <person name="Hayashi Y."/>
            <person name="Hensch T.K."/>
            <person name="Hirokawa N."/>
            <person name="Hill D."/>
            <person name="Huminiecki L."/>
            <person name="Iacono M."/>
            <person name="Ikeo K."/>
            <person name="Iwama A."/>
            <person name="Ishikawa T."/>
            <person name="Jakt M."/>
            <person name="Kanapin A."/>
            <person name="Katoh M."/>
            <person name="Kawasawa Y."/>
            <person name="Kelso J."/>
            <person name="Kitamura H."/>
            <person name="Kitano H."/>
            <person name="Kollias G."/>
            <person name="Krishnan S.P."/>
            <person name="Kruger A."/>
            <person name="Kummerfeld S.K."/>
            <person name="Kurochkin I.V."/>
            <person name="Lareau L.F."/>
            <person name="Lazarevic D."/>
            <person name="Lipovich L."/>
            <person name="Liu J."/>
            <person name="Liuni S."/>
            <person name="McWilliam S."/>
            <person name="Madan Babu M."/>
            <person name="Madera M."/>
            <person name="Marchionni L."/>
            <person name="Matsuda H."/>
            <person name="Matsuzawa S."/>
            <person name="Miki H."/>
            <person name="Mignone F."/>
            <person name="Miyake S."/>
            <person name="Morris K."/>
            <person name="Mottagui-Tabar S."/>
            <person name="Mulder N."/>
            <person name="Nakano N."/>
            <person name="Nakauchi H."/>
            <person name="Ng P."/>
            <person name="Nilsson R."/>
            <person name="Nishiguchi S."/>
            <person name="Nishikawa S."/>
            <person name="Nori F."/>
            <person name="Ohara O."/>
            <person name="Okazaki Y."/>
            <person name="Orlando V."/>
            <person name="Pang K.C."/>
            <person name="Pavan W.J."/>
            <person name="Pavesi G."/>
            <person name="Pesole G."/>
            <person name="Petrovsky N."/>
            <person name="Piazza S."/>
            <person name="Reed J."/>
            <person name="Reid J.F."/>
            <person name="Ring B.Z."/>
            <person name="Ringwald M."/>
            <person name="Rost B."/>
            <person name="Ruan Y."/>
            <person name="Salzberg S.L."/>
            <person name="Sandelin A."/>
            <person name="Schneider C."/>
            <person name="Schoenbach C."/>
            <person name="Sekiguchi K."/>
            <person name="Semple C.A."/>
            <person name="Seno S."/>
            <person name="Sessa L."/>
            <person name="Sheng Y."/>
            <person name="Shibata Y."/>
            <person name="Shimada H."/>
            <person name="Shimada K."/>
            <person name="Silva D."/>
            <person name="Sinclair B."/>
            <person name="Sperling S."/>
            <person name="Stupka E."/>
            <person name="Sugiura K."/>
            <person name="Sultana R."/>
            <person name="Takenaka Y."/>
            <person name="Taki K."/>
            <person name="Tammoja K."/>
            <person name="Tan S.L."/>
            <person name="Tang S."/>
            <person name="Taylor M.S."/>
            <person name="Tegner J."/>
            <person name="Teichmann S.A."/>
            <person name="Ueda H.R."/>
            <person name="van Nimwegen E."/>
            <person name="Verardo R."/>
            <person name="Wei C.L."/>
            <person name="Yagi K."/>
            <person name="Yamanishi H."/>
            <person name="Zabarovsky E."/>
            <person name="Zhu S."/>
            <person name="Zimmer A."/>
            <person name="Hide W."/>
            <person name="Bult C."/>
            <person name="Grimmond S.M."/>
            <person name="Teasdale R.D."/>
            <person name="Liu E.T."/>
            <person name="Brusic V."/>
            <person name="Quackenbush J."/>
            <person name="Wahlestedt C."/>
            <person name="Mattick J.S."/>
            <person name="Hume D.A."/>
            <person name="Kai C."/>
            <person name="Sasaki D."/>
            <person name="Tomaru Y."/>
            <person name="Fukuda S."/>
            <person name="Kanamori-Katayama M."/>
            <person name="Suzuki M."/>
            <person name="Aoki J."/>
            <person name="Arakawa T."/>
            <person name="Iida J."/>
            <person name="Imamura K."/>
            <person name="Itoh M."/>
            <person name="Kato T."/>
            <person name="Kawaji H."/>
            <person name="Kawagashira N."/>
            <person name="Kawashima T."/>
            <person name="Kojima M."/>
            <person name="Kondo S."/>
            <person name="Konno H."/>
            <person name="Nakano K."/>
            <person name="Ninomiya N."/>
            <person name="Nishio T."/>
            <person name="Okada M."/>
            <person name="Plessy C."/>
            <person name="Shibata K."/>
            <person name="Shiraki T."/>
            <person name="Suzuki S."/>
            <person name="Tagami M."/>
            <person name="Waki K."/>
            <person name="Watahiki A."/>
            <person name="Okamura-Oho Y."/>
            <person name="Suzuki H."/>
            <person name="Kawai J."/>
            <person name="Hayashizaki Y."/>
        </authorList>
    </citation>
    <scope>NUCLEOTIDE SEQUENCE [LARGE SCALE MRNA]</scope>
    <source>
        <strain>C57BL/6J</strain>
        <tissue>Skin</tissue>
    </source>
</reference>
<reference key="2">
    <citation type="journal article" date="2004" name="Genome Res.">
        <title>The status, quality, and expansion of the NIH full-length cDNA project: the Mammalian Gene Collection (MGC).</title>
        <authorList>
            <consortium name="The MGC Project Team"/>
        </authorList>
    </citation>
    <scope>NUCLEOTIDE SEQUENCE [LARGE SCALE MRNA]</scope>
    <source>
        <tissue>Brain</tissue>
    </source>
</reference>
<keyword id="KW-1015">Disulfide bond</keyword>
<keyword id="KW-0245">EGF-like domain</keyword>
<keyword id="KW-0325">Glycoprotein</keyword>
<keyword id="KW-0326">Glycosidase</keyword>
<keyword id="KW-0378">Hydrolase</keyword>
<keyword id="KW-0472">Membrane</keyword>
<keyword id="KW-1185">Reference proteome</keyword>
<keyword id="KW-0812">Transmembrane</keyword>
<keyword id="KW-1133">Transmembrane helix</keyword>
<sequence length="481" mass="54385">MQLLPEGQLRLCVFQPVHLTSGLLILFILKSISSLKPARLPVYQRKPFIAAWNAPTDLCLIKYNLTLNLKVFQMVGSPRLKDRGQNVVIFYANRLGYYPWYTSEGVPINGGLPQNTSLQVHLKKAAQDINYYIPSENFSGLAVIDWEYWRPQWARNWNTKDIYRQKSRTLISDMKENISAADIEYSAKATFEKSAKAFMEETIKLGSKSRPKGLWGYYLYPDCHNYNVYATNYTGSCPEEEVLRNNDLSWLWNSSTALYPAVSIRKSFADSENTLHFSRFRVRESLRISTMTSQDYALPVFVYTQLGYKEEPLLFLSKQDLISTIGESAALGAAGIVVWGDMNLTSSEENCTKVNRFVNSDFGSYIINVTRAAEVCSRHLCKNNGRCVRKTWKAAHYLHLNPASYHIEASEDGEFIVRGRASDTDLAVMAENFLCHCYEGYEGADCREMTEASGPSGLSLSSSSVITLCLLVLAGYQSIQL</sequence>
<protein>
    <recommendedName>
        <fullName>Hyaluronidase-4</fullName>
        <shortName>Hyal-4</shortName>
        <ecNumber>3.2.1.35</ecNumber>
    </recommendedName>
    <alternativeName>
        <fullName>Chondroitin sulfate endo-beta-N-acetylgalactosaminidase</fullName>
    </alternativeName>
    <alternativeName>
        <fullName>Chondroitin sulfate hydrolase</fullName>
        <shortName>CSHY</shortName>
    </alternativeName>
    <alternativeName>
        <fullName>Hyaluronoglucosaminidase-4</fullName>
    </alternativeName>
</protein>